<feature type="chain" id="PRO_0000101749" description="Potassium channel subfamily K member 5">
    <location>
        <begin position="1"/>
        <end position="499"/>
    </location>
</feature>
<feature type="topological domain" description="Cytoplasmic" evidence="2">
    <location>
        <begin position="1"/>
        <end position="7"/>
    </location>
</feature>
<feature type="transmembrane region" description="Helical" evidence="2">
    <location>
        <begin position="8"/>
        <end position="26"/>
    </location>
</feature>
<feature type="intramembrane region" description="Pore-forming; Name=Pore-forming 1" evidence="2">
    <location>
        <begin position="85"/>
        <end position="112"/>
    </location>
</feature>
<feature type="transmembrane region" description="Helical" evidence="2">
    <location>
        <begin position="113"/>
        <end position="133"/>
    </location>
</feature>
<feature type="topological domain" description="Cytoplasmic" evidence="2">
    <location>
        <begin position="134"/>
        <end position="157"/>
    </location>
</feature>
<feature type="transmembrane region" description="Helical" evidence="2">
    <location>
        <begin position="158"/>
        <end position="180"/>
    </location>
</feature>
<feature type="intramembrane region" description="Pore-forming; Name=Pore-forming 2" evidence="2">
    <location>
        <begin position="190"/>
        <end position="215"/>
    </location>
</feature>
<feature type="transmembrane region" description="Helical" evidence="2">
    <location>
        <begin position="230"/>
        <end position="250"/>
    </location>
</feature>
<feature type="topological domain" description="Cytoplasmic" evidence="2">
    <location>
        <begin position="251"/>
        <end position="325"/>
    </location>
</feature>
<feature type="region of interest" description="Selectivity filter 1" evidence="1">
    <location>
        <begin position="98"/>
        <end position="103"/>
    </location>
</feature>
<feature type="region of interest" description="Selectivity filter 2" evidence="1">
    <location>
        <begin position="203"/>
        <end position="208"/>
    </location>
</feature>
<feature type="region of interest" description="Disordered" evidence="3">
    <location>
        <begin position="312"/>
        <end position="335"/>
    </location>
</feature>
<feature type="region of interest" description="Disordered" evidence="3">
    <location>
        <begin position="360"/>
        <end position="388"/>
    </location>
</feature>
<feature type="region of interest" description="Disordered" evidence="3">
    <location>
        <begin position="428"/>
        <end position="499"/>
    </location>
</feature>
<feature type="compositionally biased region" description="Gly residues" evidence="3">
    <location>
        <begin position="316"/>
        <end position="334"/>
    </location>
</feature>
<feature type="compositionally biased region" description="Basic and acidic residues" evidence="3">
    <location>
        <begin position="370"/>
        <end position="382"/>
    </location>
</feature>
<feature type="compositionally biased region" description="Low complexity" evidence="3">
    <location>
        <begin position="466"/>
        <end position="480"/>
    </location>
</feature>
<feature type="binding site" evidence="1">
    <location>
        <position position="98"/>
    </location>
    <ligand>
        <name>K(+)</name>
        <dbReference type="ChEBI" id="CHEBI:29103"/>
        <label>1</label>
    </ligand>
</feature>
<feature type="binding site" evidence="1">
    <location>
        <position position="98"/>
    </location>
    <ligand>
        <name>K(+)</name>
        <dbReference type="ChEBI" id="CHEBI:29103"/>
        <label>4</label>
    </ligand>
</feature>
<feature type="binding site" evidence="1">
    <location>
        <position position="99"/>
    </location>
    <ligand>
        <name>K(+)</name>
        <dbReference type="ChEBI" id="CHEBI:29103"/>
        <label>1</label>
    </ligand>
</feature>
<feature type="binding site" evidence="1">
    <location>
        <position position="99"/>
    </location>
    <ligand>
        <name>K(+)</name>
        <dbReference type="ChEBI" id="CHEBI:29103"/>
        <label>2</label>
    </ligand>
</feature>
<feature type="binding site" evidence="1">
    <location>
        <position position="100"/>
    </location>
    <ligand>
        <name>K(+)</name>
        <dbReference type="ChEBI" id="CHEBI:29103"/>
        <label>2</label>
    </ligand>
</feature>
<feature type="binding site" evidence="1">
    <location>
        <position position="100"/>
    </location>
    <ligand>
        <name>K(+)</name>
        <dbReference type="ChEBI" id="CHEBI:29103"/>
        <label>3</label>
    </ligand>
</feature>
<feature type="binding site" evidence="1">
    <location>
        <position position="101"/>
    </location>
    <ligand>
        <name>K(+)</name>
        <dbReference type="ChEBI" id="CHEBI:29103"/>
        <label>3</label>
    </ligand>
</feature>
<feature type="binding site" evidence="1">
    <location>
        <position position="203"/>
    </location>
    <ligand>
        <name>K(+)</name>
        <dbReference type="ChEBI" id="CHEBI:29103"/>
        <label>1</label>
    </ligand>
</feature>
<feature type="binding site" evidence="1">
    <location>
        <position position="203"/>
    </location>
    <ligand>
        <name>K(+)</name>
        <dbReference type="ChEBI" id="CHEBI:29103"/>
        <label>4</label>
    </ligand>
</feature>
<feature type="binding site" evidence="1">
    <location>
        <position position="204"/>
    </location>
    <ligand>
        <name>K(+)</name>
        <dbReference type="ChEBI" id="CHEBI:29103"/>
        <label>1</label>
    </ligand>
</feature>
<feature type="binding site" evidence="1">
    <location>
        <position position="204"/>
    </location>
    <ligand>
        <name>K(+)</name>
        <dbReference type="ChEBI" id="CHEBI:29103"/>
        <label>2</label>
    </ligand>
</feature>
<feature type="binding site" evidence="1">
    <location>
        <position position="205"/>
    </location>
    <ligand>
        <name>K(+)</name>
        <dbReference type="ChEBI" id="CHEBI:29103"/>
        <label>2</label>
    </ligand>
</feature>
<feature type="binding site" evidence="1">
    <location>
        <position position="205"/>
    </location>
    <ligand>
        <name>K(+)</name>
        <dbReference type="ChEBI" id="CHEBI:29103"/>
        <label>3</label>
    </ligand>
</feature>
<feature type="binding site" evidence="1">
    <location>
        <position position="206"/>
    </location>
    <ligand>
        <name>K(+)</name>
        <dbReference type="ChEBI" id="CHEBI:29103"/>
        <label>3</label>
    </ligand>
</feature>
<feature type="modified residue" description="Phosphoserine" evidence="10">
    <location>
        <position position="371"/>
    </location>
</feature>
<feature type="glycosylation site" description="N-linked (GlcNAc...) asparagine" evidence="2">
    <location>
        <position position="77"/>
    </location>
</feature>
<feature type="disulfide bond" description="Interchain (with C-51)" evidence="1">
    <location>
        <position position="51"/>
    </location>
</feature>
<feature type="sequence variant" id="VAR_052425" description="In dbSNP:rs9462487.">
    <original>P</original>
    <variation>T</variation>
    <location>
        <position position="465"/>
    </location>
</feature>
<feature type="mutagenesis site" description="Abolishes voltage-dependent gating. Conducts instantaneous currents with linear current-voltage relationship." evidence="4">
    <original>T</original>
    <variation>C</variation>
    <location>
        <position position="98"/>
    </location>
</feature>
<feature type="mutagenesis site" description="Abolishes voltage-dependent gating. Conducts instantaneous currents with linear current-voltage relationship." evidence="4">
    <original>T</original>
    <variation>C</variation>
    <location>
        <position position="203"/>
    </location>
</feature>
<feature type="sequence conflict" description="In Ref. 3; BAG36953." evidence="8" ref="3">
    <original>V</original>
    <variation>A</variation>
    <location>
        <position position="423"/>
    </location>
</feature>
<protein>
    <recommendedName>
        <fullName evidence="8">Potassium channel subfamily K member 5</fullName>
    </recommendedName>
    <alternativeName>
        <fullName>Acid-sensitive potassium channel protein TASK-2</fullName>
    </alternativeName>
    <alternativeName>
        <fullName>TWIK-related acid-sensitive K(+) channel 2</fullName>
    </alternativeName>
</protein>
<sequence>MVDRGPLLTSAIIFYLAIGAAIFEVLEEPHWKEAKKNYYTQKLHLLKEFPCLGQEGLDKILEVVSDAAGQGVAITGNQTFNNWNWPNAMIFAATVITTIGYGNVAPKTPAGRLFCVFYGLFGVPLCLTWISALGKFFGGRAKRLGQFLTKRGVSLRKAQITCTVIFIVWGVLVHLVIPPFVFMVTEGWNYIEGLYYSFITISTIGFGDFVAGVNPSANYHALYRYFVELWIYLGLAWLSLFVNWKVSMFVEVHKAIKKRRRRRKESFESSPHSRKALQVKGSTASKDVNIFSFLSKKEETYNDLIKQIGKKAMKTSGGGETGPGPGLGPQGGGLPALPPSLVPLVVYSKNRVPTLEEVSQTLRSKGHVSRSPDEEAVARAPEDSSPAPEVFMNQLDRISEECEPWDAQDYHPLIFQDASITFVNTEAGLSDEETSKSSLEDNLAGEESPQQGAEAKAPLNMGEFPSSSESTFTSTESELSVPYEQLMNEYNKANSPKGT</sequence>
<proteinExistence type="evidence at protein level"/>
<dbReference type="EMBL" id="AF084830">
    <property type="protein sequence ID" value="AAC79458.1"/>
    <property type="molecule type" value="mRNA"/>
</dbReference>
<dbReference type="EMBL" id="EU978936">
    <property type="protein sequence ID" value="ACH86095.1"/>
    <property type="molecule type" value="mRNA"/>
</dbReference>
<dbReference type="EMBL" id="AK314298">
    <property type="protein sequence ID" value="BAG36953.1"/>
    <property type="molecule type" value="mRNA"/>
</dbReference>
<dbReference type="EMBL" id="AL451185">
    <property type="status" value="NOT_ANNOTATED_CDS"/>
    <property type="molecule type" value="Genomic_DNA"/>
</dbReference>
<dbReference type="EMBL" id="CH471081">
    <property type="protein sequence ID" value="EAX03979.1"/>
    <property type="molecule type" value="Genomic_DNA"/>
</dbReference>
<dbReference type="EMBL" id="BC060793">
    <property type="protein sequence ID" value="AAH60793.1"/>
    <property type="molecule type" value="mRNA"/>
</dbReference>
<dbReference type="EMBL" id="BC069573">
    <property type="protein sequence ID" value="AAH69573.1"/>
    <property type="molecule type" value="mRNA"/>
</dbReference>
<dbReference type="CCDS" id="CCDS4841.1"/>
<dbReference type="RefSeq" id="NP_003731.1">
    <property type="nucleotide sequence ID" value="NM_003740.4"/>
</dbReference>
<dbReference type="SMR" id="O95279"/>
<dbReference type="BioGRID" id="114197">
    <property type="interactions" value="33"/>
</dbReference>
<dbReference type="FunCoup" id="O95279">
    <property type="interactions" value="712"/>
</dbReference>
<dbReference type="IntAct" id="O95279">
    <property type="interactions" value="29"/>
</dbReference>
<dbReference type="STRING" id="9606.ENSP00000352527"/>
<dbReference type="BindingDB" id="O95279"/>
<dbReference type="ChEMBL" id="CHEMBL4523157"/>
<dbReference type="GuidetoPHARMACOLOGY" id="517"/>
<dbReference type="TCDB" id="1.A.1.8.2">
    <property type="family name" value="the voltage-gated ion channel (vic) superfamily"/>
</dbReference>
<dbReference type="GlyCosmos" id="O95279">
    <property type="glycosylation" value="1 site, No reported glycans"/>
</dbReference>
<dbReference type="GlyGen" id="O95279">
    <property type="glycosylation" value="2 sites, 1 O-linked glycan (1 site)"/>
</dbReference>
<dbReference type="iPTMnet" id="O95279"/>
<dbReference type="PhosphoSitePlus" id="O95279"/>
<dbReference type="BioMuta" id="KCNK5"/>
<dbReference type="jPOST" id="O95279"/>
<dbReference type="MassIVE" id="O95279"/>
<dbReference type="PaxDb" id="9606-ENSP00000352527"/>
<dbReference type="PeptideAtlas" id="O95279"/>
<dbReference type="ProteomicsDB" id="50787"/>
<dbReference type="Antibodypedia" id="15697">
    <property type="antibodies" value="108 antibodies from 28 providers"/>
</dbReference>
<dbReference type="DNASU" id="8645"/>
<dbReference type="Ensembl" id="ENST00000359534.4">
    <property type="protein sequence ID" value="ENSP00000352527.3"/>
    <property type="gene ID" value="ENSG00000164626.9"/>
</dbReference>
<dbReference type="GeneID" id="8645"/>
<dbReference type="KEGG" id="hsa:8645"/>
<dbReference type="MANE-Select" id="ENST00000359534.4">
    <property type="protein sequence ID" value="ENSP00000352527.3"/>
    <property type="RefSeq nucleotide sequence ID" value="NM_003740.4"/>
    <property type="RefSeq protein sequence ID" value="NP_003731.1"/>
</dbReference>
<dbReference type="UCSC" id="uc003oon.4">
    <property type="organism name" value="human"/>
</dbReference>
<dbReference type="AGR" id="HGNC:6280"/>
<dbReference type="CTD" id="8645"/>
<dbReference type="DisGeNET" id="8645"/>
<dbReference type="GeneCards" id="KCNK5"/>
<dbReference type="HGNC" id="HGNC:6280">
    <property type="gene designation" value="KCNK5"/>
</dbReference>
<dbReference type="HPA" id="ENSG00000164626">
    <property type="expression patterns" value="Tissue enhanced (intestine, kidney)"/>
</dbReference>
<dbReference type="MIM" id="603493">
    <property type="type" value="gene"/>
</dbReference>
<dbReference type="neXtProt" id="NX_O95279"/>
<dbReference type="OpenTargets" id="ENSG00000164626"/>
<dbReference type="PharmGKB" id="PA30062"/>
<dbReference type="VEuPathDB" id="HostDB:ENSG00000164626"/>
<dbReference type="eggNOG" id="KOG1418">
    <property type="taxonomic scope" value="Eukaryota"/>
</dbReference>
<dbReference type="GeneTree" id="ENSGT00940000156775"/>
<dbReference type="HOGENOM" id="CLU_040658_0_0_1"/>
<dbReference type="InParanoid" id="O95279"/>
<dbReference type="OMA" id="YWNWPNA"/>
<dbReference type="OrthoDB" id="297496at2759"/>
<dbReference type="PAN-GO" id="O95279">
    <property type="GO annotations" value="5 GO annotations based on evolutionary models"/>
</dbReference>
<dbReference type="PhylomeDB" id="O95279"/>
<dbReference type="TreeFam" id="TF313947"/>
<dbReference type="PathwayCommons" id="O95279"/>
<dbReference type="Reactome" id="R-HSA-5576886">
    <property type="pathway name" value="Phase 4 - resting membrane potential"/>
</dbReference>
<dbReference type="SignaLink" id="O95279"/>
<dbReference type="BioGRID-ORCS" id="8645">
    <property type="hits" value="24 hits in 1161 CRISPR screens"/>
</dbReference>
<dbReference type="ChiTaRS" id="KCNK5">
    <property type="organism name" value="human"/>
</dbReference>
<dbReference type="GeneWiki" id="KCNK5"/>
<dbReference type="GenomeRNAi" id="8645"/>
<dbReference type="Pharos" id="O95279">
    <property type="development level" value="Tchem"/>
</dbReference>
<dbReference type="PRO" id="PR:O95279"/>
<dbReference type="Proteomes" id="UP000005640">
    <property type="component" value="Chromosome 6"/>
</dbReference>
<dbReference type="RNAct" id="O95279">
    <property type="molecule type" value="protein"/>
</dbReference>
<dbReference type="Bgee" id="ENSG00000164626">
    <property type="expression patterns" value="Expressed in pancreatic ductal cell and 155 other cell types or tissues"/>
</dbReference>
<dbReference type="ExpressionAtlas" id="O95279">
    <property type="expression patterns" value="baseline and differential"/>
</dbReference>
<dbReference type="GO" id="GO:0034702">
    <property type="term" value="C:monoatomic ion channel complex"/>
    <property type="evidence" value="ECO:0007669"/>
    <property type="project" value="UniProtKB-KW"/>
</dbReference>
<dbReference type="GO" id="GO:0005886">
    <property type="term" value="C:plasma membrane"/>
    <property type="evidence" value="ECO:0000318"/>
    <property type="project" value="GO_Central"/>
</dbReference>
<dbReference type="GO" id="GO:0046872">
    <property type="term" value="F:metal ion binding"/>
    <property type="evidence" value="ECO:0007669"/>
    <property type="project" value="UniProtKB-KW"/>
</dbReference>
<dbReference type="GO" id="GO:0015271">
    <property type="term" value="F:outward rectifier potassium channel activity"/>
    <property type="evidence" value="ECO:0000314"/>
    <property type="project" value="UniProtKB"/>
</dbReference>
<dbReference type="GO" id="GO:0005267">
    <property type="term" value="F:potassium channel activity"/>
    <property type="evidence" value="ECO:0000314"/>
    <property type="project" value="GO_Central"/>
</dbReference>
<dbReference type="GO" id="GO:0022841">
    <property type="term" value="F:potassium ion leak channel activity"/>
    <property type="evidence" value="ECO:0000318"/>
    <property type="project" value="GO_Central"/>
</dbReference>
<dbReference type="GO" id="GO:0046982">
    <property type="term" value="F:protein heterodimerization activity"/>
    <property type="evidence" value="ECO:0000314"/>
    <property type="project" value="UniProtKB"/>
</dbReference>
<dbReference type="GO" id="GO:0097623">
    <property type="term" value="P:potassium ion export across plasma membrane"/>
    <property type="evidence" value="ECO:0000250"/>
    <property type="project" value="ARUK-UCL"/>
</dbReference>
<dbReference type="GO" id="GO:1990573">
    <property type="term" value="P:potassium ion import across plasma membrane"/>
    <property type="evidence" value="ECO:0007669"/>
    <property type="project" value="Ensembl"/>
</dbReference>
<dbReference type="GO" id="GO:0071805">
    <property type="term" value="P:potassium ion transmembrane transport"/>
    <property type="evidence" value="ECO:0000318"/>
    <property type="project" value="GO_Central"/>
</dbReference>
<dbReference type="GO" id="GO:0006813">
    <property type="term" value="P:potassium ion transport"/>
    <property type="evidence" value="ECO:0000314"/>
    <property type="project" value="GO_Central"/>
</dbReference>
<dbReference type="GO" id="GO:0060075">
    <property type="term" value="P:regulation of resting membrane potential"/>
    <property type="evidence" value="ECO:0000250"/>
    <property type="project" value="ARUK-UCL"/>
</dbReference>
<dbReference type="FunFam" id="1.10.287.70:FF:000077">
    <property type="entry name" value="Potassium channel subfamily K member 5"/>
    <property type="match status" value="1"/>
</dbReference>
<dbReference type="Gene3D" id="1.10.287.70">
    <property type="match status" value="1"/>
</dbReference>
<dbReference type="InterPro" id="IPR003280">
    <property type="entry name" value="2pore_dom_K_chnl"/>
</dbReference>
<dbReference type="InterPro" id="IPR003092">
    <property type="entry name" value="2pore_dom_K_chnl_TASK"/>
</dbReference>
<dbReference type="InterPro" id="IPR013099">
    <property type="entry name" value="K_chnl_dom"/>
</dbReference>
<dbReference type="PANTHER" id="PTHR11003:SF241">
    <property type="entry name" value="POTASSIUM CHANNEL SUBFAMILY K MEMBER 5"/>
    <property type="match status" value="1"/>
</dbReference>
<dbReference type="PANTHER" id="PTHR11003">
    <property type="entry name" value="POTASSIUM CHANNEL, SUBFAMILY K"/>
    <property type="match status" value="1"/>
</dbReference>
<dbReference type="Pfam" id="PF07885">
    <property type="entry name" value="Ion_trans_2"/>
    <property type="match status" value="2"/>
</dbReference>
<dbReference type="PRINTS" id="PR01333">
    <property type="entry name" value="2POREKCHANEL"/>
</dbReference>
<dbReference type="PRINTS" id="PR01095">
    <property type="entry name" value="TASKCHANNEL"/>
</dbReference>
<dbReference type="SUPFAM" id="SSF81324">
    <property type="entry name" value="Voltage-gated potassium channels"/>
    <property type="match status" value="2"/>
</dbReference>
<evidence type="ECO:0000250" key="1">
    <source>
        <dbReference type="UniProtKB" id="P57789"/>
    </source>
</evidence>
<evidence type="ECO:0000255" key="2"/>
<evidence type="ECO:0000256" key="3">
    <source>
        <dbReference type="SAM" id="MobiDB-lite"/>
    </source>
</evidence>
<evidence type="ECO:0000269" key="4">
    <source>
    </source>
</evidence>
<evidence type="ECO:0000269" key="5">
    <source>
    </source>
</evidence>
<evidence type="ECO:0000269" key="6">
    <source>
    </source>
</evidence>
<evidence type="ECO:0000303" key="7">
    <source>
    </source>
</evidence>
<evidence type="ECO:0000305" key="8"/>
<evidence type="ECO:0000312" key="9">
    <source>
        <dbReference type="HGNC" id="HGNC:6280"/>
    </source>
</evidence>
<evidence type="ECO:0007744" key="10">
    <source>
    </source>
</evidence>
<reference key="1">
    <citation type="journal article" date="1998" name="J. Biol. Chem.">
        <title>Cloning and expression of a novel pH-sensitive two pore domain K+ channel from human kidney.</title>
        <authorList>
            <person name="Reyes R."/>
            <person name="Duprat F."/>
            <person name="Lesage F."/>
            <person name="Fink M."/>
            <person name="Salinas M."/>
            <person name="Farman N."/>
            <person name="Lazdunski M."/>
        </authorList>
    </citation>
    <scope>NUCLEOTIDE SEQUENCE [MRNA]</scope>
    <scope>FUNCTION</scope>
    <scope>TRANSPORTER ACTIVITY</scope>
    <scope>ACTIVITY REGULATION</scope>
    <scope>TISSUE SPECIFICITY</scope>
    <source>
        <tissue>Kidney</tissue>
    </source>
</reference>
<reference key="2">
    <citation type="journal article" date="2008" name="Br. J. Pharmacol.">
        <title>Regulation of two-pore-domain (K2P) potassium leak channels by the tyrosine kinase inhibitor genistein.</title>
        <authorList>
            <person name="Gierten J."/>
            <person name="Ficker E."/>
            <person name="Bloehs R."/>
            <person name="Schlomer K."/>
            <person name="Kathofer S."/>
            <person name="Scholz E."/>
            <person name="Zitron E."/>
            <person name="Kiesecker C."/>
            <person name="Bauer A."/>
            <person name="Becker R."/>
            <person name="Katus H.A."/>
            <person name="Karle C.A."/>
            <person name="Thomas D."/>
        </authorList>
    </citation>
    <scope>NUCLEOTIDE SEQUENCE [MRNA]</scope>
    <source>
        <tissue>Brain</tissue>
    </source>
</reference>
<reference key="3">
    <citation type="journal article" date="2004" name="Nat. Genet.">
        <title>Complete sequencing and characterization of 21,243 full-length human cDNAs.</title>
        <authorList>
            <person name="Ota T."/>
            <person name="Suzuki Y."/>
            <person name="Nishikawa T."/>
            <person name="Otsuki T."/>
            <person name="Sugiyama T."/>
            <person name="Irie R."/>
            <person name="Wakamatsu A."/>
            <person name="Hayashi K."/>
            <person name="Sato H."/>
            <person name="Nagai K."/>
            <person name="Kimura K."/>
            <person name="Makita H."/>
            <person name="Sekine M."/>
            <person name="Obayashi M."/>
            <person name="Nishi T."/>
            <person name="Shibahara T."/>
            <person name="Tanaka T."/>
            <person name="Ishii S."/>
            <person name="Yamamoto J."/>
            <person name="Saito K."/>
            <person name="Kawai Y."/>
            <person name="Isono Y."/>
            <person name="Nakamura Y."/>
            <person name="Nagahari K."/>
            <person name="Murakami K."/>
            <person name="Yasuda T."/>
            <person name="Iwayanagi T."/>
            <person name="Wagatsuma M."/>
            <person name="Shiratori A."/>
            <person name="Sudo H."/>
            <person name="Hosoiri T."/>
            <person name="Kaku Y."/>
            <person name="Kodaira H."/>
            <person name="Kondo H."/>
            <person name="Sugawara M."/>
            <person name="Takahashi M."/>
            <person name="Kanda K."/>
            <person name="Yokoi T."/>
            <person name="Furuya T."/>
            <person name="Kikkawa E."/>
            <person name="Omura Y."/>
            <person name="Abe K."/>
            <person name="Kamihara K."/>
            <person name="Katsuta N."/>
            <person name="Sato K."/>
            <person name="Tanikawa M."/>
            <person name="Yamazaki M."/>
            <person name="Ninomiya K."/>
            <person name="Ishibashi T."/>
            <person name="Yamashita H."/>
            <person name="Murakawa K."/>
            <person name="Fujimori K."/>
            <person name="Tanai H."/>
            <person name="Kimata M."/>
            <person name="Watanabe M."/>
            <person name="Hiraoka S."/>
            <person name="Chiba Y."/>
            <person name="Ishida S."/>
            <person name="Ono Y."/>
            <person name="Takiguchi S."/>
            <person name="Watanabe S."/>
            <person name="Yosida M."/>
            <person name="Hotuta T."/>
            <person name="Kusano J."/>
            <person name="Kanehori K."/>
            <person name="Takahashi-Fujii A."/>
            <person name="Hara H."/>
            <person name="Tanase T.-O."/>
            <person name="Nomura Y."/>
            <person name="Togiya S."/>
            <person name="Komai F."/>
            <person name="Hara R."/>
            <person name="Takeuchi K."/>
            <person name="Arita M."/>
            <person name="Imose N."/>
            <person name="Musashino K."/>
            <person name="Yuuki H."/>
            <person name="Oshima A."/>
            <person name="Sasaki N."/>
            <person name="Aotsuka S."/>
            <person name="Yoshikawa Y."/>
            <person name="Matsunawa H."/>
            <person name="Ichihara T."/>
            <person name="Shiohata N."/>
            <person name="Sano S."/>
            <person name="Moriya S."/>
            <person name="Momiyama H."/>
            <person name="Satoh N."/>
            <person name="Takami S."/>
            <person name="Terashima Y."/>
            <person name="Suzuki O."/>
            <person name="Nakagawa S."/>
            <person name="Senoh A."/>
            <person name="Mizoguchi H."/>
            <person name="Goto Y."/>
            <person name="Shimizu F."/>
            <person name="Wakebe H."/>
            <person name="Hishigaki H."/>
            <person name="Watanabe T."/>
            <person name="Sugiyama A."/>
            <person name="Takemoto M."/>
            <person name="Kawakami B."/>
            <person name="Yamazaki M."/>
            <person name="Watanabe K."/>
            <person name="Kumagai A."/>
            <person name="Itakura S."/>
            <person name="Fukuzumi Y."/>
            <person name="Fujimori Y."/>
            <person name="Komiyama M."/>
            <person name="Tashiro H."/>
            <person name="Tanigami A."/>
            <person name="Fujiwara T."/>
            <person name="Ono T."/>
            <person name="Yamada K."/>
            <person name="Fujii Y."/>
            <person name="Ozaki K."/>
            <person name="Hirao M."/>
            <person name="Ohmori Y."/>
            <person name="Kawabata A."/>
            <person name="Hikiji T."/>
            <person name="Kobatake N."/>
            <person name="Inagaki H."/>
            <person name="Ikema Y."/>
            <person name="Okamoto S."/>
            <person name="Okitani R."/>
            <person name="Kawakami T."/>
            <person name="Noguchi S."/>
            <person name="Itoh T."/>
            <person name="Shigeta K."/>
            <person name="Senba T."/>
            <person name="Matsumura K."/>
            <person name="Nakajima Y."/>
            <person name="Mizuno T."/>
            <person name="Morinaga M."/>
            <person name="Sasaki M."/>
            <person name="Togashi T."/>
            <person name="Oyama M."/>
            <person name="Hata H."/>
            <person name="Watanabe M."/>
            <person name="Komatsu T."/>
            <person name="Mizushima-Sugano J."/>
            <person name="Satoh T."/>
            <person name="Shirai Y."/>
            <person name="Takahashi Y."/>
            <person name="Nakagawa K."/>
            <person name="Okumura K."/>
            <person name="Nagase T."/>
            <person name="Nomura N."/>
            <person name="Kikuchi H."/>
            <person name="Masuho Y."/>
            <person name="Yamashita R."/>
            <person name="Nakai K."/>
            <person name="Yada T."/>
            <person name="Nakamura Y."/>
            <person name="Ohara O."/>
            <person name="Isogai T."/>
            <person name="Sugano S."/>
        </authorList>
    </citation>
    <scope>NUCLEOTIDE SEQUENCE [LARGE SCALE MRNA]</scope>
    <source>
        <tissue>Trachea</tissue>
    </source>
</reference>
<reference key="4">
    <citation type="journal article" date="2003" name="Nature">
        <title>The DNA sequence and analysis of human chromosome 6.</title>
        <authorList>
            <person name="Mungall A.J."/>
            <person name="Palmer S.A."/>
            <person name="Sims S.K."/>
            <person name="Edwards C.A."/>
            <person name="Ashurst J.L."/>
            <person name="Wilming L."/>
            <person name="Jones M.C."/>
            <person name="Horton R."/>
            <person name="Hunt S.E."/>
            <person name="Scott C.E."/>
            <person name="Gilbert J.G.R."/>
            <person name="Clamp M.E."/>
            <person name="Bethel G."/>
            <person name="Milne S."/>
            <person name="Ainscough R."/>
            <person name="Almeida J.P."/>
            <person name="Ambrose K.D."/>
            <person name="Andrews T.D."/>
            <person name="Ashwell R.I.S."/>
            <person name="Babbage A.K."/>
            <person name="Bagguley C.L."/>
            <person name="Bailey J."/>
            <person name="Banerjee R."/>
            <person name="Barker D.J."/>
            <person name="Barlow K.F."/>
            <person name="Bates K."/>
            <person name="Beare D.M."/>
            <person name="Beasley H."/>
            <person name="Beasley O."/>
            <person name="Bird C.P."/>
            <person name="Blakey S.E."/>
            <person name="Bray-Allen S."/>
            <person name="Brook J."/>
            <person name="Brown A.J."/>
            <person name="Brown J.Y."/>
            <person name="Burford D.C."/>
            <person name="Burrill W."/>
            <person name="Burton J."/>
            <person name="Carder C."/>
            <person name="Carter N.P."/>
            <person name="Chapman J.C."/>
            <person name="Clark S.Y."/>
            <person name="Clark G."/>
            <person name="Clee C.M."/>
            <person name="Clegg S."/>
            <person name="Cobley V."/>
            <person name="Collier R.E."/>
            <person name="Collins J.E."/>
            <person name="Colman L.K."/>
            <person name="Corby N.R."/>
            <person name="Coville G.J."/>
            <person name="Culley K.M."/>
            <person name="Dhami P."/>
            <person name="Davies J."/>
            <person name="Dunn M."/>
            <person name="Earthrowl M.E."/>
            <person name="Ellington A.E."/>
            <person name="Evans K.A."/>
            <person name="Faulkner L."/>
            <person name="Francis M.D."/>
            <person name="Frankish A."/>
            <person name="Frankland J."/>
            <person name="French L."/>
            <person name="Garner P."/>
            <person name="Garnett J."/>
            <person name="Ghori M.J."/>
            <person name="Gilby L.M."/>
            <person name="Gillson C.J."/>
            <person name="Glithero R.J."/>
            <person name="Grafham D.V."/>
            <person name="Grant M."/>
            <person name="Gribble S."/>
            <person name="Griffiths C."/>
            <person name="Griffiths M.N.D."/>
            <person name="Hall R."/>
            <person name="Halls K.S."/>
            <person name="Hammond S."/>
            <person name="Harley J.L."/>
            <person name="Hart E.A."/>
            <person name="Heath P.D."/>
            <person name="Heathcott R."/>
            <person name="Holmes S.J."/>
            <person name="Howden P.J."/>
            <person name="Howe K.L."/>
            <person name="Howell G.R."/>
            <person name="Huckle E."/>
            <person name="Humphray S.J."/>
            <person name="Humphries M.D."/>
            <person name="Hunt A.R."/>
            <person name="Johnson C.M."/>
            <person name="Joy A.A."/>
            <person name="Kay M."/>
            <person name="Keenan S.J."/>
            <person name="Kimberley A.M."/>
            <person name="King A."/>
            <person name="Laird G.K."/>
            <person name="Langford C."/>
            <person name="Lawlor S."/>
            <person name="Leongamornlert D.A."/>
            <person name="Leversha M."/>
            <person name="Lloyd C.R."/>
            <person name="Lloyd D.M."/>
            <person name="Loveland J.E."/>
            <person name="Lovell J."/>
            <person name="Martin S."/>
            <person name="Mashreghi-Mohammadi M."/>
            <person name="Maslen G.L."/>
            <person name="Matthews L."/>
            <person name="McCann O.T."/>
            <person name="McLaren S.J."/>
            <person name="McLay K."/>
            <person name="McMurray A."/>
            <person name="Moore M.J.F."/>
            <person name="Mullikin J.C."/>
            <person name="Niblett D."/>
            <person name="Nickerson T."/>
            <person name="Novik K.L."/>
            <person name="Oliver K."/>
            <person name="Overton-Larty E.K."/>
            <person name="Parker A."/>
            <person name="Patel R."/>
            <person name="Pearce A.V."/>
            <person name="Peck A.I."/>
            <person name="Phillimore B.J.C.T."/>
            <person name="Phillips S."/>
            <person name="Plumb R.W."/>
            <person name="Porter K.M."/>
            <person name="Ramsey Y."/>
            <person name="Ranby S.A."/>
            <person name="Rice C.M."/>
            <person name="Ross M.T."/>
            <person name="Searle S.M."/>
            <person name="Sehra H.K."/>
            <person name="Sheridan E."/>
            <person name="Skuce C.D."/>
            <person name="Smith S."/>
            <person name="Smith M."/>
            <person name="Spraggon L."/>
            <person name="Squares S.L."/>
            <person name="Steward C.A."/>
            <person name="Sycamore N."/>
            <person name="Tamlyn-Hall G."/>
            <person name="Tester J."/>
            <person name="Theaker A.J."/>
            <person name="Thomas D.W."/>
            <person name="Thorpe A."/>
            <person name="Tracey A."/>
            <person name="Tromans A."/>
            <person name="Tubby B."/>
            <person name="Wall M."/>
            <person name="Wallis J.M."/>
            <person name="West A.P."/>
            <person name="White S.S."/>
            <person name="Whitehead S.L."/>
            <person name="Whittaker H."/>
            <person name="Wild A."/>
            <person name="Willey D.J."/>
            <person name="Wilmer T.E."/>
            <person name="Wood J.M."/>
            <person name="Wray P.W."/>
            <person name="Wyatt J.C."/>
            <person name="Young L."/>
            <person name="Younger R.M."/>
            <person name="Bentley D.R."/>
            <person name="Coulson A."/>
            <person name="Durbin R.M."/>
            <person name="Hubbard T."/>
            <person name="Sulston J.E."/>
            <person name="Dunham I."/>
            <person name="Rogers J."/>
            <person name="Beck S."/>
        </authorList>
    </citation>
    <scope>NUCLEOTIDE SEQUENCE [LARGE SCALE GENOMIC DNA]</scope>
</reference>
<reference key="5">
    <citation type="submission" date="2005-07" db="EMBL/GenBank/DDBJ databases">
        <authorList>
            <person name="Mural R.J."/>
            <person name="Istrail S."/>
            <person name="Sutton G.G."/>
            <person name="Florea L."/>
            <person name="Halpern A.L."/>
            <person name="Mobarry C.M."/>
            <person name="Lippert R."/>
            <person name="Walenz B."/>
            <person name="Shatkay H."/>
            <person name="Dew I."/>
            <person name="Miller J.R."/>
            <person name="Flanigan M.J."/>
            <person name="Edwards N.J."/>
            <person name="Bolanos R."/>
            <person name="Fasulo D."/>
            <person name="Halldorsson B.V."/>
            <person name="Hannenhalli S."/>
            <person name="Turner R."/>
            <person name="Yooseph S."/>
            <person name="Lu F."/>
            <person name="Nusskern D.R."/>
            <person name="Shue B.C."/>
            <person name="Zheng X.H."/>
            <person name="Zhong F."/>
            <person name="Delcher A.L."/>
            <person name="Huson D.H."/>
            <person name="Kravitz S.A."/>
            <person name="Mouchard L."/>
            <person name="Reinert K."/>
            <person name="Remington K.A."/>
            <person name="Clark A.G."/>
            <person name="Waterman M.S."/>
            <person name="Eichler E.E."/>
            <person name="Adams M.D."/>
            <person name="Hunkapiller M.W."/>
            <person name="Myers E.W."/>
            <person name="Venter J.C."/>
        </authorList>
    </citation>
    <scope>NUCLEOTIDE SEQUENCE [LARGE SCALE GENOMIC DNA]</scope>
</reference>
<reference key="6">
    <citation type="journal article" date="2004" name="Genome Res.">
        <title>The status, quality, and expansion of the NIH full-length cDNA project: the Mammalian Gene Collection (MGC).</title>
        <authorList>
            <consortium name="The MGC Project Team"/>
        </authorList>
    </citation>
    <scope>NUCLEOTIDE SEQUENCE [LARGE SCALE MRNA]</scope>
    <source>
        <tissue>Placenta</tissue>
    </source>
</reference>
<reference key="7">
    <citation type="journal article" date="2008" name="Mol. Cell">
        <title>Kinase-selective enrichment enables quantitative phosphoproteomics of the kinome across the cell cycle.</title>
        <authorList>
            <person name="Daub H."/>
            <person name="Olsen J.V."/>
            <person name="Bairlein M."/>
            <person name="Gnad F."/>
            <person name="Oppermann F.S."/>
            <person name="Korner R."/>
            <person name="Greff Z."/>
            <person name="Keri G."/>
            <person name="Stemmann O."/>
            <person name="Mann M."/>
        </authorList>
    </citation>
    <scope>PHOSPHORYLATION [LARGE SCALE ANALYSIS] AT SER-371</scope>
    <scope>IDENTIFICATION BY MASS SPECTROMETRY [LARGE SCALE ANALYSIS]</scope>
    <source>
        <tissue>Cervix carcinoma</tissue>
    </source>
</reference>
<reference key="8">
    <citation type="journal article" date="2016" name="Cell">
        <title>A Non-canonical Voltage-Sensing Mechanism Controls Gating in K2P K(+) Channels.</title>
        <authorList>
            <person name="Schewe M."/>
            <person name="Nematian-Ardestani E."/>
            <person name="Sun H."/>
            <person name="Musinszki M."/>
            <person name="Cordeiro S."/>
            <person name="Bucci G."/>
            <person name="de Groot B.L."/>
            <person name="Tucker S.J."/>
            <person name="Rapedius M."/>
            <person name="Baukrowitz T."/>
        </authorList>
    </citation>
    <scope>FUNCTION</scope>
    <scope>TRANSPORTER ACTIVITY</scope>
    <scope>REACTION MECHANISM</scope>
    <scope>MUTAGENESIS OF THR-98 AND THR-203</scope>
</reference>
<reference key="9">
    <citation type="journal article" date="2022" name="J. Biol. Chem.">
        <title>Alkaline-sensitive two-pore domain potassium channels form functional heteromers in pancreatic beta-cells.</title>
        <authorList>
            <person name="Khoubza L."/>
            <person name="Gilbert N."/>
            <person name="Kim E.J."/>
            <person name="Chatelain F.C."/>
            <person name="Feliciangeli S."/>
            <person name="Abelanet S."/>
            <person name="Kang D."/>
            <person name="Lesage F."/>
            <person name="Bichet D."/>
        </authorList>
    </citation>
    <scope>FUNCTION</scope>
    <scope>TRANSPORTER ACTIVITY</scope>
    <scope>ACTIVITY REGULATION</scope>
    <scope>BIOPHYSICOCHEMICAL PROPERTIES</scope>
    <scope>SUBUNIT</scope>
    <scope>INTERACTION WITH KCNK16 AND KCNK17</scope>
    <scope>TISSUE SPECIFICITY</scope>
</reference>
<keyword id="KW-1015">Disulfide bond</keyword>
<keyword id="KW-0325">Glycoprotein</keyword>
<keyword id="KW-0407">Ion channel</keyword>
<keyword id="KW-0406">Ion transport</keyword>
<keyword id="KW-0472">Membrane</keyword>
<keyword id="KW-0479">Metal-binding</keyword>
<keyword id="KW-0597">Phosphoprotein</keyword>
<keyword id="KW-0630">Potassium</keyword>
<keyword id="KW-0631">Potassium channel</keyword>
<keyword id="KW-0633">Potassium transport</keyword>
<keyword id="KW-1267">Proteomics identification</keyword>
<keyword id="KW-1185">Reference proteome</keyword>
<keyword id="KW-0812">Transmembrane</keyword>
<keyword id="KW-1133">Transmembrane helix</keyword>
<keyword id="KW-0813">Transport</keyword>
<keyword id="KW-0851">Voltage-gated channel</keyword>
<accession>O95279</accession>
<accession>B2RAQ6</accession>
<accession>B5TJL2</accession>
<accession>Q5VV76</accession>
<organism>
    <name type="scientific">Homo sapiens</name>
    <name type="common">Human</name>
    <dbReference type="NCBI Taxonomy" id="9606"/>
    <lineage>
        <taxon>Eukaryota</taxon>
        <taxon>Metazoa</taxon>
        <taxon>Chordata</taxon>
        <taxon>Craniata</taxon>
        <taxon>Vertebrata</taxon>
        <taxon>Euteleostomi</taxon>
        <taxon>Mammalia</taxon>
        <taxon>Eutheria</taxon>
        <taxon>Euarchontoglires</taxon>
        <taxon>Primates</taxon>
        <taxon>Haplorrhini</taxon>
        <taxon>Catarrhini</taxon>
        <taxon>Hominidae</taxon>
        <taxon>Homo</taxon>
    </lineage>
</organism>
<comment type="function">
    <text evidence="4 5 6">K(+) channel that conducts voltage-dependent outward rectifying currents upon membrane depolarization. Voltage sensing is coupled to K(+) electrochemical gradient in an 'ion flux gating' mode where outward but not inward ion flow opens the gate (PubMed:26919430, PubMed:36063992, PubMed:9812978). Homo- and heterodimerizes to form functional channels with distinct regulatory and gating properties (PubMed:36063992).</text>
</comment>
<comment type="catalytic activity">
    <reaction evidence="4 5 6">
        <text>K(+)(in) = K(+)(out)</text>
        <dbReference type="Rhea" id="RHEA:29463"/>
        <dbReference type="ChEBI" id="CHEBI:29103"/>
    </reaction>
</comment>
<comment type="activity regulation">
    <text evidence="5 6">The channel conductance is stimulated by extracellular alkaline pH. Inhibited by quinine, quinidine and external acidification.</text>
</comment>
<comment type="biophysicochemical properties">
    <phDependence>
        <text evidence="5">The homodimer is gated open at pH &gt; 6. The heterodimer with KCNK16 or KCNK17 is gated open at physiological pH range 7-8 and increases current conductance at alkaline pH without apparent saturation.</text>
    </phDependence>
</comment>
<comment type="subunit">
    <text evidence="5">Homodimer; disulfide-linked. Heterodimer with KCNK16 and KCNK17.</text>
</comment>
<comment type="interaction">
    <interactant intactId="EBI-3934936">
        <id>O95279</id>
    </interactant>
    <interactant intactId="EBI-10827839">
        <id>Q15848</id>
        <label>ADIPOQ</label>
    </interactant>
    <organismsDiffer>false</organismsDiffer>
    <experiments>3</experiments>
</comment>
<comment type="interaction">
    <interactant intactId="EBI-3934936">
        <id>O95279</id>
    </interactant>
    <interactant intactId="EBI-11522760">
        <id>Q6RW13-2</id>
        <label>AGTRAP</label>
    </interactant>
    <organismsDiffer>false</organismsDiffer>
    <experiments>3</experiments>
</comment>
<comment type="interaction">
    <interactant intactId="EBI-3934936">
        <id>O95279</id>
    </interactant>
    <interactant intactId="EBI-745213">
        <id>P29972</id>
        <label>AQP1</label>
    </interactant>
    <organismsDiffer>false</organismsDiffer>
    <experiments>3</experiments>
</comment>
<comment type="interaction">
    <interactant intactId="EBI-3934936">
        <id>O95279</id>
    </interactant>
    <interactant intactId="EBI-2606700">
        <id>P18859</id>
        <label>ATP5PF</label>
    </interactant>
    <organismsDiffer>false</organismsDiffer>
    <experiments>3</experiments>
</comment>
<comment type="interaction">
    <interactant intactId="EBI-3934936">
        <id>O95279</id>
    </interactant>
    <interactant intactId="EBI-752094">
        <id>Q12982</id>
        <label>BNIP2</label>
    </interactant>
    <organismsDiffer>false</organismsDiffer>
    <experiments>3</experiments>
</comment>
<comment type="interaction">
    <interactant intactId="EBI-3934936">
        <id>O95279</id>
    </interactant>
    <interactant intactId="EBI-11522780">
        <id>Q96DZ9-2</id>
        <label>CMTM5</label>
    </interactant>
    <organismsDiffer>false</organismsDiffer>
    <experiments>3</experiments>
</comment>
<comment type="interaction">
    <interactant intactId="EBI-3934936">
        <id>O95279</id>
    </interactant>
    <interactant intactId="EBI-372265">
        <id>P21964</id>
        <label>COMT</label>
    </interactant>
    <organismsDiffer>false</organismsDiffer>
    <experiments>3</experiments>
</comment>
<comment type="interaction">
    <interactant intactId="EBI-3934936">
        <id>O95279</id>
    </interactant>
    <interactant intactId="EBI-1058710">
        <id>O43169</id>
        <label>CYB5B</label>
    </interactant>
    <organismsDiffer>false</organismsDiffer>
    <experiments>3</experiments>
</comment>
<comment type="interaction">
    <interactant intactId="EBI-3934936">
        <id>O95279</id>
    </interactant>
    <interactant intactId="EBI-3905204">
        <id>P29033</id>
        <label>GJB2</label>
    </interactant>
    <organismsDiffer>false</organismsDiffer>
    <experiments>3</experiments>
</comment>
<comment type="interaction">
    <interactant intactId="EBI-3934936">
        <id>O95279</id>
    </interactant>
    <interactant intactId="EBI-720480">
        <id>P24593</id>
        <label>IGFBP5</label>
    </interactant>
    <organismsDiffer>false</organismsDiffer>
    <experiments>3</experiments>
</comment>
<comment type="interaction">
    <interactant intactId="EBI-3934936">
        <id>O95279</id>
    </interactant>
    <interactant intactId="EBI-2820517">
        <id>Q8TAF8</id>
        <label>LHFPL5</label>
    </interactant>
    <organismsDiffer>false</organismsDiffer>
    <experiments>3</experiments>
</comment>
<comment type="interaction">
    <interactant intactId="EBI-3934936">
        <id>O95279</id>
    </interactant>
    <interactant intactId="EBI-12243024">
        <id>Q9Y2E5</id>
        <label>MAN2B2</label>
    </interactant>
    <organismsDiffer>false</organismsDiffer>
    <experiments>3</experiments>
</comment>
<comment type="interaction">
    <interactant intactId="EBI-3934936">
        <id>O95279</id>
    </interactant>
    <interactant intactId="EBI-721750">
        <id>Q8N138</id>
        <label>ORMDL3</label>
    </interactant>
    <organismsDiffer>false</organismsDiffer>
    <experiments>3</experiments>
</comment>
<comment type="interaction">
    <interactant intactId="EBI-3934936">
        <id>O95279</id>
    </interactant>
    <interactant intactId="EBI-3907610">
        <id>Q8N2U9</id>
        <label>SLC66A2</label>
    </interactant>
    <organismsDiffer>false</organismsDiffer>
    <experiments>3</experiments>
</comment>
<comment type="interaction">
    <interactant intactId="EBI-3934936">
        <id>O95279</id>
    </interactant>
    <interactant intactId="EBI-8640191">
        <id>Q9NRQ5</id>
        <label>SMCO4</label>
    </interactant>
    <organismsDiffer>false</organismsDiffer>
    <experiments>3</experiments>
</comment>
<comment type="interaction">
    <interactant intactId="EBI-3934936">
        <id>O95279</id>
    </interactant>
    <interactant intactId="EBI-12200293">
        <id>P0DN84</id>
        <label>STRIT1</label>
    </interactant>
    <organismsDiffer>false</organismsDiffer>
    <experiments>3</experiments>
</comment>
<comment type="interaction">
    <interactant intactId="EBI-3934936">
        <id>O95279</id>
    </interactant>
    <interactant intactId="EBI-8650934">
        <id>P48230</id>
        <label>TM4SF4</label>
    </interactant>
    <organismsDiffer>false</organismsDiffer>
    <experiments>3</experiments>
</comment>
<comment type="interaction">
    <interactant intactId="EBI-3934936">
        <id>O95279</id>
    </interactant>
    <interactant intactId="EBI-10694905">
        <id>Q5BJH2-2</id>
        <label>TMEM128</label>
    </interactant>
    <organismsDiffer>false</organismsDiffer>
    <experiments>3</experiments>
</comment>
<comment type="interaction">
    <interactant intactId="EBI-3934936">
        <id>O95279</id>
    </interactant>
    <interactant intactId="EBI-2800360">
        <id>Q9Y6G1</id>
        <label>TMEM14A</label>
    </interactant>
    <organismsDiffer>false</organismsDiffer>
    <experiments>3</experiments>
</comment>
<comment type="interaction">
    <interactant intactId="EBI-3934936">
        <id>O95279</id>
    </interactant>
    <interactant intactId="EBI-2800645">
        <id>Q96HP8</id>
        <label>TMEM176A</label>
    </interactant>
    <organismsDiffer>false</organismsDiffer>
    <experiments>3</experiments>
</comment>
<comment type="interaction">
    <interactant intactId="EBI-3934936">
        <id>O95279</id>
    </interactant>
    <interactant intactId="EBI-10173151">
        <id>A2RU14</id>
        <label>TMEM218</label>
    </interactant>
    <organismsDiffer>false</organismsDiffer>
    <experiments>3</experiments>
</comment>
<comment type="interaction">
    <interactant intactId="EBI-3934936">
        <id>O95279</id>
    </interactant>
    <interactant intactId="EBI-3922833">
        <id>Q969K7</id>
        <label>TMEM54</label>
    </interactant>
    <organismsDiffer>false</organismsDiffer>
    <experiments>3</experiments>
</comment>
<comment type="interaction">
    <interactant intactId="EBI-3934936">
        <id>O95279</id>
    </interactant>
    <interactant intactId="EBI-2852148">
        <id>Q9H2L4</id>
        <label>TMEM60</label>
    </interactant>
    <organismsDiffer>false</organismsDiffer>
    <experiments>3</experiments>
</comment>
<comment type="interaction">
    <interactant intactId="EBI-3934936">
        <id>O95279</id>
    </interactant>
    <interactant intactId="EBI-717441">
        <id>O14798</id>
        <label>TNFRSF10C</label>
    </interactant>
    <organismsDiffer>false</organismsDiffer>
    <experiments>3</experiments>
</comment>
<comment type="interaction">
    <interactant intactId="EBI-3934936">
        <id>O95279</id>
    </interactant>
    <interactant intactId="EBI-12045841">
        <id>Q86UF1</id>
        <label>TSPAN33</label>
    </interactant>
    <organismsDiffer>false</organismsDiffer>
    <experiments>3</experiments>
</comment>
<comment type="interaction">
    <interactant intactId="EBI-3934936">
        <id>O95279</id>
    </interactant>
    <interactant intactId="EBI-722343">
        <id>Q15836</id>
        <label>VAMP3</label>
    </interactant>
    <organismsDiffer>false</organismsDiffer>
    <experiments>3</experiments>
</comment>
<comment type="interaction">
    <interactant intactId="EBI-3934936">
        <id>O95279</id>
    </interactant>
    <interactant intactId="EBI-751210">
        <id>Q96EC8</id>
        <label>YIPF6</label>
    </interactant>
    <organismsDiffer>false</organismsDiffer>
    <experiments>3</experiments>
</comment>
<comment type="subcellular location">
    <subcellularLocation>
        <location evidence="8">Membrane</location>
        <topology evidence="8">Multi-pass membrane protein</topology>
    </subcellularLocation>
</comment>
<comment type="tissue specificity">
    <text evidence="5 6">Abundant expression in kidney, also detected in liver, placenta and small intestine. In the kidney, expression is restricted to the distal tubules and collecting ducts (PubMed:9812978). Not expressed in proximal tubules or glomeruli (PubMed:9812978). Expressed in pancreas, in both endocrine (alpha, beta, gamma, delta, and epsilon) and exocrine (acinar and ductal) cells.</text>
</comment>
<comment type="domain">
    <text evidence="1">The pore-forming domains 1 and 2 assemble to form a single pore in which M2 and M4 transmembrane helices line the central cavity and M1 and M3 face the lipid bilayer. The transmembrane helices are bridged by the selectivity filters 1 and 2 carrying a signature sequence TxTTxGYGD that coordinate the permeant ions. Up to four ions can simultaneously occupy the selectivity filter and at least two elementary charges must translocate across the filter to convert it into the open conformation.</text>
</comment>
<comment type="similarity">
    <text evidence="8">Belongs to the two pore domain potassium channel (TC 1.A.1.8) family.</text>
</comment>
<name>KCNK5_HUMAN</name>
<gene>
    <name evidence="9" type="primary">KCNK5</name>
    <name evidence="7" type="synonym">TASK2</name>
</gene>